<reference key="1">
    <citation type="journal article" date="2006" name="J. Bacteriol.">
        <title>Comparative genomic analysis of three strains of Ehrlichia ruminantium reveals an active process of genome size plasticity.</title>
        <authorList>
            <person name="Frutos R."/>
            <person name="Viari A."/>
            <person name="Ferraz C."/>
            <person name="Morgat A."/>
            <person name="Eychenie S."/>
            <person name="Kandassamy Y."/>
            <person name="Chantal I."/>
            <person name="Bensaid A."/>
            <person name="Coissac E."/>
            <person name="Vachiery N."/>
            <person name="Demaille J."/>
            <person name="Martinez D."/>
        </authorList>
    </citation>
    <scope>NUCLEOTIDE SEQUENCE [LARGE SCALE GENOMIC DNA]</scope>
    <source>
        <strain>Gardel</strain>
    </source>
</reference>
<sequence length="94" mass="10462">MNLNMLHDNVLIEALEESLNNSPIQLPESAKKKPTKGKVVAVGPGSYNNNGNLIPMTLKVGDVVFYRQWAGNEVEFSDKKYIVMKESDIIAKEV</sequence>
<comment type="function">
    <text evidence="1">Together with the chaperonin GroEL, plays an essential role in assisting protein folding. The GroEL-GroES system forms a nano-cage that allows encapsulation of the non-native substrate proteins and provides a physical environment optimized to promote and accelerate protein folding. GroES binds to the apical surface of the GroEL ring, thereby capping the opening of the GroEL channel.</text>
</comment>
<comment type="subunit">
    <text evidence="1">Heptamer of 7 subunits arranged in a ring. Interacts with the chaperonin GroEL.</text>
</comment>
<comment type="subcellular location">
    <subcellularLocation>
        <location evidence="1">Cytoplasm</location>
    </subcellularLocation>
</comment>
<comment type="similarity">
    <text evidence="1">Belongs to the GroES chaperonin family.</text>
</comment>
<organism>
    <name type="scientific">Ehrlichia ruminantium (strain Gardel)</name>
    <dbReference type="NCBI Taxonomy" id="302409"/>
    <lineage>
        <taxon>Bacteria</taxon>
        <taxon>Pseudomonadati</taxon>
        <taxon>Pseudomonadota</taxon>
        <taxon>Alphaproteobacteria</taxon>
        <taxon>Rickettsiales</taxon>
        <taxon>Anaplasmataceae</taxon>
        <taxon>Ehrlichia</taxon>
    </lineage>
</organism>
<proteinExistence type="inferred from homology"/>
<evidence type="ECO:0000255" key="1">
    <source>
        <dbReference type="HAMAP-Rule" id="MF_00580"/>
    </source>
</evidence>
<keyword id="KW-0143">Chaperone</keyword>
<keyword id="KW-0963">Cytoplasm</keyword>
<feature type="chain" id="PRO_1000025257" description="Co-chaperonin GroES">
    <location>
        <begin position="1"/>
        <end position="94"/>
    </location>
</feature>
<name>CH10_EHRRG</name>
<dbReference type="EMBL" id="CR925677">
    <property type="protein sequence ID" value="CAI28117.1"/>
    <property type="molecule type" value="Genomic_DNA"/>
</dbReference>
<dbReference type="RefSeq" id="WP_011155323.1">
    <property type="nucleotide sequence ID" value="NC_006831.1"/>
</dbReference>
<dbReference type="SMR" id="Q5FFZ0"/>
<dbReference type="KEGG" id="erg:ERGA_CDS_06650"/>
<dbReference type="HOGENOM" id="CLU_132825_1_0_5"/>
<dbReference type="OrthoDB" id="9806791at2"/>
<dbReference type="Proteomes" id="UP000000533">
    <property type="component" value="Chromosome"/>
</dbReference>
<dbReference type="GO" id="GO:0005737">
    <property type="term" value="C:cytoplasm"/>
    <property type="evidence" value="ECO:0007669"/>
    <property type="project" value="UniProtKB-SubCell"/>
</dbReference>
<dbReference type="GO" id="GO:0005524">
    <property type="term" value="F:ATP binding"/>
    <property type="evidence" value="ECO:0007669"/>
    <property type="project" value="InterPro"/>
</dbReference>
<dbReference type="GO" id="GO:0046872">
    <property type="term" value="F:metal ion binding"/>
    <property type="evidence" value="ECO:0007669"/>
    <property type="project" value="TreeGrafter"/>
</dbReference>
<dbReference type="GO" id="GO:0044183">
    <property type="term" value="F:protein folding chaperone"/>
    <property type="evidence" value="ECO:0007669"/>
    <property type="project" value="InterPro"/>
</dbReference>
<dbReference type="GO" id="GO:0051087">
    <property type="term" value="F:protein-folding chaperone binding"/>
    <property type="evidence" value="ECO:0007669"/>
    <property type="project" value="TreeGrafter"/>
</dbReference>
<dbReference type="GO" id="GO:0051082">
    <property type="term" value="F:unfolded protein binding"/>
    <property type="evidence" value="ECO:0007669"/>
    <property type="project" value="TreeGrafter"/>
</dbReference>
<dbReference type="GO" id="GO:0051085">
    <property type="term" value="P:chaperone cofactor-dependent protein refolding"/>
    <property type="evidence" value="ECO:0007669"/>
    <property type="project" value="TreeGrafter"/>
</dbReference>
<dbReference type="CDD" id="cd00320">
    <property type="entry name" value="cpn10"/>
    <property type="match status" value="1"/>
</dbReference>
<dbReference type="FunFam" id="2.30.33.40:FF:000001">
    <property type="entry name" value="10 kDa chaperonin"/>
    <property type="match status" value="1"/>
</dbReference>
<dbReference type="Gene3D" id="2.30.33.40">
    <property type="entry name" value="GroES chaperonin"/>
    <property type="match status" value="1"/>
</dbReference>
<dbReference type="HAMAP" id="MF_00580">
    <property type="entry name" value="CH10"/>
    <property type="match status" value="1"/>
</dbReference>
<dbReference type="InterPro" id="IPR020818">
    <property type="entry name" value="Chaperonin_GroES"/>
</dbReference>
<dbReference type="InterPro" id="IPR037124">
    <property type="entry name" value="Chaperonin_GroES_sf"/>
</dbReference>
<dbReference type="InterPro" id="IPR011032">
    <property type="entry name" value="GroES-like_sf"/>
</dbReference>
<dbReference type="NCBIfam" id="NF001533">
    <property type="entry name" value="PRK00364.2-4"/>
    <property type="match status" value="1"/>
</dbReference>
<dbReference type="PANTHER" id="PTHR10772">
    <property type="entry name" value="10 KDA HEAT SHOCK PROTEIN"/>
    <property type="match status" value="1"/>
</dbReference>
<dbReference type="PANTHER" id="PTHR10772:SF63">
    <property type="entry name" value="20 KDA CHAPERONIN, CHLOROPLASTIC"/>
    <property type="match status" value="1"/>
</dbReference>
<dbReference type="Pfam" id="PF00166">
    <property type="entry name" value="Cpn10"/>
    <property type="match status" value="1"/>
</dbReference>
<dbReference type="PRINTS" id="PR00297">
    <property type="entry name" value="CHAPERONIN10"/>
</dbReference>
<dbReference type="SMART" id="SM00883">
    <property type="entry name" value="Cpn10"/>
    <property type="match status" value="1"/>
</dbReference>
<dbReference type="SUPFAM" id="SSF50129">
    <property type="entry name" value="GroES-like"/>
    <property type="match status" value="1"/>
</dbReference>
<accession>Q5FFZ0</accession>
<protein>
    <recommendedName>
        <fullName evidence="1">Co-chaperonin GroES</fullName>
    </recommendedName>
    <alternativeName>
        <fullName evidence="1">10 kDa chaperonin</fullName>
    </alternativeName>
    <alternativeName>
        <fullName evidence="1">Chaperonin-10</fullName>
        <shortName evidence="1">Cpn10</shortName>
    </alternativeName>
</protein>
<gene>
    <name evidence="1" type="primary">groES</name>
    <name evidence="1" type="synonym">groS</name>
    <name type="ordered locus">ERGA_CDS_06650</name>
</gene>